<proteinExistence type="inferred from homology"/>
<sequence>MKRAFIMVLDSFGIGATEDAERFGDVGADTLGHIAEACAKGEADNGRKGPLNLPNLTRLGLAKAHEGSTGFIPAGMDGNAEVIGAYAWAHEMSSGKDTPSGHWEIAGVPVLFEWGYFSDHENSFPQELLDKLVERANLPGYLGNCHSSGTVILDQLGEEHMKTGKPIFYTSADSVFQIACHEETFGLDKLYELCEIAREELTNGGYNIGRVIARPFIGDKAGNFQRTGNRHDLAVEPPAPTVLQKLVDEKHGQVVSVGKIADIYANCGITKKVKATGLDALFDATIKEMKEAGDNTIVFTNFVDFDSSWGHRRDVAGYAAGLELFDRRLPELMSLLRDDDILILTADHGCDPTWTGTDHTREHIPVLVYGPKVKPGSLGHRETFADIGQTLAKYFGTSDMEYGKAMF</sequence>
<feature type="chain" id="PRO_1000148244" description="Phosphopentomutase">
    <location>
        <begin position="1"/>
        <end position="407"/>
    </location>
</feature>
<feature type="binding site" evidence="1">
    <location>
        <position position="10"/>
    </location>
    <ligand>
        <name>Mn(2+)</name>
        <dbReference type="ChEBI" id="CHEBI:29035"/>
        <label>1</label>
    </ligand>
</feature>
<feature type="binding site" evidence="1">
    <location>
        <position position="306"/>
    </location>
    <ligand>
        <name>Mn(2+)</name>
        <dbReference type="ChEBI" id="CHEBI:29035"/>
        <label>2</label>
    </ligand>
</feature>
<feature type="binding site" evidence="1">
    <location>
        <position position="311"/>
    </location>
    <ligand>
        <name>Mn(2+)</name>
        <dbReference type="ChEBI" id="CHEBI:29035"/>
        <label>2</label>
    </ligand>
</feature>
<feature type="binding site" evidence="1">
    <location>
        <position position="347"/>
    </location>
    <ligand>
        <name>Mn(2+)</name>
        <dbReference type="ChEBI" id="CHEBI:29035"/>
        <label>1</label>
    </ligand>
</feature>
<feature type="binding site" evidence="1">
    <location>
        <position position="348"/>
    </location>
    <ligand>
        <name>Mn(2+)</name>
        <dbReference type="ChEBI" id="CHEBI:29035"/>
        <label>1</label>
    </ligand>
</feature>
<feature type="binding site" evidence="1">
    <location>
        <position position="359"/>
    </location>
    <ligand>
        <name>Mn(2+)</name>
        <dbReference type="ChEBI" id="CHEBI:29035"/>
        <label>2</label>
    </ligand>
</feature>
<comment type="function">
    <text evidence="1">Isomerase that catalyzes the conversion of deoxy-ribose 1-phosphate (dRib-1-P) and ribose 1-phosphate (Rib-1-P) to deoxy-ribose 5-phosphate (dRib-5-P) and ribose 5-phosphate (Rib-5-P), respectively.</text>
</comment>
<comment type="catalytic activity">
    <reaction evidence="1">
        <text>2-deoxy-alpha-D-ribose 1-phosphate = 2-deoxy-D-ribose 5-phosphate</text>
        <dbReference type="Rhea" id="RHEA:27658"/>
        <dbReference type="ChEBI" id="CHEBI:57259"/>
        <dbReference type="ChEBI" id="CHEBI:62877"/>
        <dbReference type="EC" id="5.4.2.7"/>
    </reaction>
</comment>
<comment type="catalytic activity">
    <reaction evidence="1">
        <text>alpha-D-ribose 1-phosphate = D-ribose 5-phosphate</text>
        <dbReference type="Rhea" id="RHEA:18793"/>
        <dbReference type="ChEBI" id="CHEBI:57720"/>
        <dbReference type="ChEBI" id="CHEBI:78346"/>
        <dbReference type="EC" id="5.4.2.7"/>
    </reaction>
</comment>
<comment type="cofactor">
    <cofactor evidence="1">
        <name>Mn(2+)</name>
        <dbReference type="ChEBI" id="CHEBI:29035"/>
    </cofactor>
    <text evidence="1">Binds 2 manganese ions.</text>
</comment>
<comment type="pathway">
    <text evidence="1">Carbohydrate degradation; 2-deoxy-D-ribose 1-phosphate degradation; D-glyceraldehyde 3-phosphate and acetaldehyde from 2-deoxy-alpha-D-ribose 1-phosphate: step 1/2.</text>
</comment>
<comment type="subcellular location">
    <subcellularLocation>
        <location evidence="1">Cytoplasm</location>
    </subcellularLocation>
</comment>
<comment type="similarity">
    <text evidence="1">Belongs to the phosphopentomutase family.</text>
</comment>
<evidence type="ECO:0000255" key="1">
    <source>
        <dbReference type="HAMAP-Rule" id="MF_00740"/>
    </source>
</evidence>
<protein>
    <recommendedName>
        <fullName evidence="1">Phosphopentomutase</fullName>
        <ecNumber evidence="1">5.4.2.7</ecNumber>
    </recommendedName>
    <alternativeName>
        <fullName evidence="1">Phosphodeoxyribomutase</fullName>
    </alternativeName>
</protein>
<reference key="1">
    <citation type="journal article" date="2009" name="PLoS Genet.">
        <title>Organised genome dynamics in the Escherichia coli species results in highly diverse adaptive paths.</title>
        <authorList>
            <person name="Touchon M."/>
            <person name="Hoede C."/>
            <person name="Tenaillon O."/>
            <person name="Barbe V."/>
            <person name="Baeriswyl S."/>
            <person name="Bidet P."/>
            <person name="Bingen E."/>
            <person name="Bonacorsi S."/>
            <person name="Bouchier C."/>
            <person name="Bouvet O."/>
            <person name="Calteau A."/>
            <person name="Chiapello H."/>
            <person name="Clermont O."/>
            <person name="Cruveiller S."/>
            <person name="Danchin A."/>
            <person name="Diard M."/>
            <person name="Dossat C."/>
            <person name="Karoui M.E."/>
            <person name="Frapy E."/>
            <person name="Garry L."/>
            <person name="Ghigo J.M."/>
            <person name="Gilles A.M."/>
            <person name="Johnson J."/>
            <person name="Le Bouguenec C."/>
            <person name="Lescat M."/>
            <person name="Mangenot S."/>
            <person name="Martinez-Jehanne V."/>
            <person name="Matic I."/>
            <person name="Nassif X."/>
            <person name="Oztas S."/>
            <person name="Petit M.A."/>
            <person name="Pichon C."/>
            <person name="Rouy Z."/>
            <person name="Ruf C.S."/>
            <person name="Schneider D."/>
            <person name="Tourret J."/>
            <person name="Vacherie B."/>
            <person name="Vallenet D."/>
            <person name="Medigue C."/>
            <person name="Rocha E.P.C."/>
            <person name="Denamur E."/>
        </authorList>
    </citation>
    <scope>NUCLEOTIDE SEQUENCE [LARGE SCALE GENOMIC DNA]</scope>
    <source>
        <strain>ED1a</strain>
    </source>
</reference>
<organism>
    <name type="scientific">Escherichia coli O81 (strain ED1a)</name>
    <dbReference type="NCBI Taxonomy" id="585397"/>
    <lineage>
        <taxon>Bacteria</taxon>
        <taxon>Pseudomonadati</taxon>
        <taxon>Pseudomonadota</taxon>
        <taxon>Gammaproteobacteria</taxon>
        <taxon>Enterobacterales</taxon>
        <taxon>Enterobacteriaceae</taxon>
        <taxon>Escherichia</taxon>
    </lineage>
</organism>
<accession>B7MTC9</accession>
<keyword id="KW-0963">Cytoplasm</keyword>
<keyword id="KW-0413">Isomerase</keyword>
<keyword id="KW-0464">Manganese</keyword>
<keyword id="KW-0479">Metal-binding</keyword>
<name>DEOB_ECO81</name>
<gene>
    <name evidence="1" type="primary">deoB</name>
    <name type="ordered locus">ECED1_5254</name>
</gene>
<dbReference type="EC" id="5.4.2.7" evidence="1"/>
<dbReference type="EMBL" id="CU928162">
    <property type="protein sequence ID" value="CAR11205.1"/>
    <property type="molecule type" value="Genomic_DNA"/>
</dbReference>
<dbReference type="RefSeq" id="WP_000816471.1">
    <property type="nucleotide sequence ID" value="NC_011745.1"/>
</dbReference>
<dbReference type="SMR" id="B7MTC9"/>
<dbReference type="GeneID" id="89519362"/>
<dbReference type="KEGG" id="ecq:ECED1_5254"/>
<dbReference type="HOGENOM" id="CLU_053861_0_0_6"/>
<dbReference type="UniPathway" id="UPA00002">
    <property type="reaction ID" value="UER00467"/>
</dbReference>
<dbReference type="Proteomes" id="UP000000748">
    <property type="component" value="Chromosome"/>
</dbReference>
<dbReference type="GO" id="GO:0005829">
    <property type="term" value="C:cytosol"/>
    <property type="evidence" value="ECO:0007669"/>
    <property type="project" value="TreeGrafter"/>
</dbReference>
<dbReference type="GO" id="GO:0000287">
    <property type="term" value="F:magnesium ion binding"/>
    <property type="evidence" value="ECO:0007669"/>
    <property type="project" value="InterPro"/>
</dbReference>
<dbReference type="GO" id="GO:0030145">
    <property type="term" value="F:manganese ion binding"/>
    <property type="evidence" value="ECO:0007669"/>
    <property type="project" value="UniProtKB-UniRule"/>
</dbReference>
<dbReference type="GO" id="GO:0008973">
    <property type="term" value="F:phosphopentomutase activity"/>
    <property type="evidence" value="ECO:0007669"/>
    <property type="project" value="UniProtKB-UniRule"/>
</dbReference>
<dbReference type="GO" id="GO:0006018">
    <property type="term" value="P:2-deoxyribose 1-phosphate catabolic process"/>
    <property type="evidence" value="ECO:0007669"/>
    <property type="project" value="UniProtKB-UniRule"/>
</dbReference>
<dbReference type="GO" id="GO:0006015">
    <property type="term" value="P:5-phosphoribose 1-diphosphate biosynthetic process"/>
    <property type="evidence" value="ECO:0007669"/>
    <property type="project" value="UniProtKB-UniPathway"/>
</dbReference>
<dbReference type="GO" id="GO:0043094">
    <property type="term" value="P:metabolic compound salvage"/>
    <property type="evidence" value="ECO:0007669"/>
    <property type="project" value="InterPro"/>
</dbReference>
<dbReference type="GO" id="GO:0009117">
    <property type="term" value="P:nucleotide metabolic process"/>
    <property type="evidence" value="ECO:0007669"/>
    <property type="project" value="InterPro"/>
</dbReference>
<dbReference type="CDD" id="cd16009">
    <property type="entry name" value="PPM"/>
    <property type="match status" value="1"/>
</dbReference>
<dbReference type="FunFam" id="3.30.70.1250:FF:000001">
    <property type="entry name" value="Phosphopentomutase"/>
    <property type="match status" value="1"/>
</dbReference>
<dbReference type="Gene3D" id="3.40.720.10">
    <property type="entry name" value="Alkaline Phosphatase, subunit A"/>
    <property type="match status" value="1"/>
</dbReference>
<dbReference type="Gene3D" id="3.30.70.1250">
    <property type="entry name" value="Phosphopentomutase"/>
    <property type="match status" value="1"/>
</dbReference>
<dbReference type="HAMAP" id="MF_00740">
    <property type="entry name" value="Phosphopentomut"/>
    <property type="match status" value="1"/>
</dbReference>
<dbReference type="InterPro" id="IPR017850">
    <property type="entry name" value="Alkaline_phosphatase_core_sf"/>
</dbReference>
<dbReference type="InterPro" id="IPR010045">
    <property type="entry name" value="DeoB"/>
</dbReference>
<dbReference type="InterPro" id="IPR006124">
    <property type="entry name" value="Metalloenzyme"/>
</dbReference>
<dbReference type="InterPro" id="IPR024052">
    <property type="entry name" value="Phosphopentomutase_DeoB_cap_sf"/>
</dbReference>
<dbReference type="NCBIfam" id="TIGR01696">
    <property type="entry name" value="deoB"/>
    <property type="match status" value="1"/>
</dbReference>
<dbReference type="NCBIfam" id="NF003766">
    <property type="entry name" value="PRK05362.1"/>
    <property type="match status" value="1"/>
</dbReference>
<dbReference type="PANTHER" id="PTHR21110">
    <property type="entry name" value="PHOSPHOPENTOMUTASE"/>
    <property type="match status" value="1"/>
</dbReference>
<dbReference type="PANTHER" id="PTHR21110:SF0">
    <property type="entry name" value="PHOSPHOPENTOMUTASE"/>
    <property type="match status" value="1"/>
</dbReference>
<dbReference type="Pfam" id="PF01676">
    <property type="entry name" value="Metalloenzyme"/>
    <property type="match status" value="1"/>
</dbReference>
<dbReference type="PIRSF" id="PIRSF001491">
    <property type="entry name" value="Ppentomutase"/>
    <property type="match status" value="1"/>
</dbReference>
<dbReference type="SUPFAM" id="SSF53649">
    <property type="entry name" value="Alkaline phosphatase-like"/>
    <property type="match status" value="1"/>
</dbReference>
<dbReference type="SUPFAM" id="SSF143856">
    <property type="entry name" value="DeoB insert domain-like"/>
    <property type="match status" value="1"/>
</dbReference>